<sequence>MISNFILFALFIVTIALITKPLGSYIFRVFNNERTYLDWLAKPFQRVYLLVLGESSKKEQTAKAYFFSLVSFSVMAFIFVLVILLLQGILPLNPQEIKGMSFPQALNTAVSFITNTNWQSYSGETGVSYFAQMLALAVQNFVSAAVGLCVAIALIRSVARHETATIGNFWNDLGKGVFWILLPISIVIAIVYIFQGVPQNVMAYLHVHTLAGTEQIIPQGPIASQEAIKSLGTNGGGFFNANSAHPYENPTVITNYIQMVSIFAIAAALTYTFGKWVGNTKQGWLIFGVMLVLFIISLVVMTISELHGLDFLHSKDIQDIYGQVGHLSNMEGKESRFGVFYSTLYNTVSTSASDGGVNSVLDSYSPLAGMMAMLNMAIGEVIFGGVGAGFYGFFMFLMLAVFIGSLMIGRAPSFLGKRIEANDMKWTMFALLIFPCCVLVFTGLAAVIPSVHQTLTNSGAHGFSEILYAYISGANNNGSAFAGLSANTNYLNITIALSMLIGRFGVIFAVIMLAGSLVKKKRSLQMSEISSLDTTSFIFAILVFFTILLIGGLTIFPALGLGPILDQLNLNFL</sequence>
<gene>
    <name evidence="1" type="primary">kdpA</name>
    <name type="ordered locus">FTA_1992</name>
</gene>
<name>KDPA_FRATF</name>
<proteinExistence type="inferred from homology"/>
<dbReference type="EMBL" id="CP000803">
    <property type="protein sequence ID" value="ABU62467.1"/>
    <property type="molecule type" value="Genomic_DNA"/>
</dbReference>
<dbReference type="RefSeq" id="WP_003017453.1">
    <property type="nucleotide sequence ID" value="NC_009749.1"/>
</dbReference>
<dbReference type="SMR" id="A7NER4"/>
<dbReference type="KEGG" id="fta:FTA_1992"/>
<dbReference type="HOGENOM" id="CLU_018614_3_0_6"/>
<dbReference type="GO" id="GO:0005886">
    <property type="term" value="C:plasma membrane"/>
    <property type="evidence" value="ECO:0007669"/>
    <property type="project" value="UniProtKB-SubCell"/>
</dbReference>
<dbReference type="GO" id="GO:0008556">
    <property type="term" value="F:P-type potassium transmembrane transporter activity"/>
    <property type="evidence" value="ECO:0007669"/>
    <property type="project" value="InterPro"/>
</dbReference>
<dbReference type="GO" id="GO:0030955">
    <property type="term" value="F:potassium ion binding"/>
    <property type="evidence" value="ECO:0007669"/>
    <property type="project" value="UniProtKB-UniRule"/>
</dbReference>
<dbReference type="HAMAP" id="MF_00275">
    <property type="entry name" value="KdpA"/>
    <property type="match status" value="1"/>
</dbReference>
<dbReference type="InterPro" id="IPR004623">
    <property type="entry name" value="KdpA"/>
</dbReference>
<dbReference type="NCBIfam" id="TIGR00680">
    <property type="entry name" value="kdpA"/>
    <property type="match status" value="1"/>
</dbReference>
<dbReference type="PANTHER" id="PTHR30607">
    <property type="entry name" value="POTASSIUM-TRANSPORTING ATPASE A CHAIN"/>
    <property type="match status" value="1"/>
</dbReference>
<dbReference type="PANTHER" id="PTHR30607:SF2">
    <property type="entry name" value="POTASSIUM-TRANSPORTING ATPASE POTASSIUM-BINDING SUBUNIT"/>
    <property type="match status" value="1"/>
</dbReference>
<dbReference type="Pfam" id="PF03814">
    <property type="entry name" value="KdpA"/>
    <property type="match status" value="1"/>
</dbReference>
<dbReference type="PIRSF" id="PIRSF001294">
    <property type="entry name" value="K_ATPaseA"/>
    <property type="match status" value="1"/>
</dbReference>
<protein>
    <recommendedName>
        <fullName evidence="1">Potassium-transporting ATPase potassium-binding subunit</fullName>
    </recommendedName>
    <alternativeName>
        <fullName evidence="1">ATP phosphohydrolase [potassium-transporting] A chain</fullName>
    </alternativeName>
    <alternativeName>
        <fullName evidence="1">Potassium-binding and translocating subunit A</fullName>
    </alternativeName>
    <alternativeName>
        <fullName evidence="1">Potassium-translocating ATPase A chain</fullName>
    </alternativeName>
</protein>
<keyword id="KW-0997">Cell inner membrane</keyword>
<keyword id="KW-1003">Cell membrane</keyword>
<keyword id="KW-0406">Ion transport</keyword>
<keyword id="KW-0472">Membrane</keyword>
<keyword id="KW-0630">Potassium</keyword>
<keyword id="KW-0633">Potassium transport</keyword>
<keyword id="KW-0812">Transmembrane</keyword>
<keyword id="KW-1133">Transmembrane helix</keyword>
<keyword id="KW-0813">Transport</keyword>
<reference key="1">
    <citation type="journal article" date="2009" name="PLoS ONE">
        <title>Complete genome sequence of Francisella tularensis subspecies holarctica FTNF002-00.</title>
        <authorList>
            <person name="Barabote R.D."/>
            <person name="Xie G."/>
            <person name="Brettin T.S."/>
            <person name="Hinrichs S.H."/>
            <person name="Fey P.D."/>
            <person name="Jay J.J."/>
            <person name="Engle J.L."/>
            <person name="Godbole S.D."/>
            <person name="Noronha J.M."/>
            <person name="Scheuermann R.H."/>
            <person name="Zhou L.W."/>
            <person name="Lion C."/>
            <person name="Dempsey M.P."/>
        </authorList>
    </citation>
    <scope>NUCLEOTIDE SEQUENCE [LARGE SCALE GENOMIC DNA]</scope>
    <source>
        <strain>FTNF002-00 / FTA</strain>
    </source>
</reference>
<organism>
    <name type="scientific">Francisella tularensis subsp. holarctica (strain FTNF002-00 / FTA)</name>
    <dbReference type="NCBI Taxonomy" id="458234"/>
    <lineage>
        <taxon>Bacteria</taxon>
        <taxon>Pseudomonadati</taxon>
        <taxon>Pseudomonadota</taxon>
        <taxon>Gammaproteobacteria</taxon>
        <taxon>Thiotrichales</taxon>
        <taxon>Francisellaceae</taxon>
        <taxon>Francisella</taxon>
    </lineage>
</organism>
<feature type="chain" id="PRO_1000119342" description="Potassium-transporting ATPase potassium-binding subunit">
    <location>
        <begin position="1"/>
        <end position="573"/>
    </location>
</feature>
<feature type="transmembrane region" description="Helical" evidence="1">
    <location>
        <begin position="6"/>
        <end position="26"/>
    </location>
</feature>
<feature type="transmembrane region" description="Helical" evidence="1">
    <location>
        <begin position="66"/>
        <end position="86"/>
    </location>
</feature>
<feature type="transmembrane region" description="Helical" evidence="1">
    <location>
        <begin position="135"/>
        <end position="155"/>
    </location>
</feature>
<feature type="transmembrane region" description="Helical" evidence="1">
    <location>
        <begin position="177"/>
        <end position="197"/>
    </location>
</feature>
<feature type="transmembrane region" description="Helical" evidence="1">
    <location>
        <begin position="257"/>
        <end position="277"/>
    </location>
</feature>
<feature type="transmembrane region" description="Helical" evidence="1">
    <location>
        <begin position="283"/>
        <end position="303"/>
    </location>
</feature>
<feature type="transmembrane region" description="Helical" evidence="1">
    <location>
        <begin position="382"/>
        <end position="402"/>
    </location>
</feature>
<feature type="transmembrane region" description="Helical" evidence="1">
    <location>
        <begin position="428"/>
        <end position="448"/>
    </location>
</feature>
<feature type="transmembrane region" description="Helical" evidence="1">
    <location>
        <begin position="493"/>
        <end position="513"/>
    </location>
</feature>
<feature type="transmembrane region" description="Helical" evidence="1">
    <location>
        <begin position="537"/>
        <end position="557"/>
    </location>
</feature>
<comment type="function">
    <text evidence="1">Part of the high-affinity ATP-driven potassium transport (or Kdp) system, which catalyzes the hydrolysis of ATP coupled with the electrogenic transport of potassium into the cytoplasm. This subunit binds the periplasmic potassium ions and delivers the ions to the membrane domain of KdpB through an intramembrane tunnel.</text>
</comment>
<comment type="subunit">
    <text evidence="1">The system is composed of three essential subunits: KdpA, KdpB and KdpC.</text>
</comment>
<comment type="subcellular location">
    <subcellularLocation>
        <location evidence="1">Cell inner membrane</location>
        <topology evidence="1">Multi-pass membrane protein</topology>
    </subcellularLocation>
</comment>
<comment type="similarity">
    <text evidence="1">Belongs to the KdpA family.</text>
</comment>
<accession>A7NER4</accession>
<evidence type="ECO:0000255" key="1">
    <source>
        <dbReference type="HAMAP-Rule" id="MF_00275"/>
    </source>
</evidence>